<name>STX8A_SCOVN</name>
<reference key="1">
    <citation type="journal article" date="2007" name="Toxicon">
        <title>Venomic analyses of Scolopendra viridicornis nigra and Scolopendra angulata (Centipede, Scolopendromorpha): shedding light on venoms from a neglected group.</title>
        <authorList>
            <person name="Rates B."/>
            <person name="Bemquerer M.P."/>
            <person name="Richardson M."/>
            <person name="Borges M.H."/>
            <person name="Morales R.A.V."/>
            <person name="De Lima M.E."/>
            <person name="Pimenta A.M.C."/>
        </authorList>
    </citation>
    <scope>PROTEIN SEQUENCE</scope>
    <scope>MASS SPECTROMETRY</scope>
    <scope>SUBCELLULAR LOCATION</scope>
    <source>
        <tissue>Venom</tissue>
    </source>
</reference>
<proteinExistence type="evidence at protein level"/>
<comment type="subcellular location">
    <subcellularLocation>
        <location evidence="1">Secreted</location>
    </subcellularLocation>
</comment>
<comment type="tissue specificity">
    <text evidence="3">Expressed by the venom gland.</text>
</comment>
<comment type="mass spectrometry"/>
<comment type="similarity">
    <text evidence="2">Belongs to the scolopendra toxin 8 family.</text>
</comment>
<sequence>LKVPDLPLPESYXXALNLAXD</sequence>
<dbReference type="GO" id="GO:0005576">
    <property type="term" value="C:extracellular region"/>
    <property type="evidence" value="ECO:0007669"/>
    <property type="project" value="UniProtKB-SubCell"/>
</dbReference>
<dbReference type="GO" id="GO:0090729">
    <property type="term" value="F:toxin activity"/>
    <property type="evidence" value="ECO:0007669"/>
    <property type="project" value="UniProtKB-KW"/>
</dbReference>
<evidence type="ECO:0000269" key="1">
    <source>
    </source>
</evidence>
<evidence type="ECO:0000305" key="2"/>
<evidence type="ECO:0000305" key="3">
    <source>
    </source>
</evidence>
<feature type="chain" id="PRO_0000352867" description="Scolopendra 7997.01 Da toxin">
    <location>
        <begin position="1"/>
        <end position="21" status="greater than"/>
    </location>
</feature>
<feature type="non-terminal residue">
    <location>
        <position position="21"/>
    </location>
</feature>
<protein>
    <recommendedName>
        <fullName>Scolopendra 7997.01 Da toxin</fullName>
    </recommendedName>
</protein>
<organism>
    <name type="scientific">Scolopendra viridicornis nigra</name>
    <name type="common">Brazilian giant centipede</name>
    <dbReference type="NCBI Taxonomy" id="486497"/>
    <lineage>
        <taxon>Eukaryota</taxon>
        <taxon>Metazoa</taxon>
        <taxon>Ecdysozoa</taxon>
        <taxon>Arthropoda</taxon>
        <taxon>Myriapoda</taxon>
        <taxon>Chilopoda</taxon>
        <taxon>Pleurostigmophora</taxon>
        <taxon>Scolopendromorpha</taxon>
        <taxon>Scolopendridae</taxon>
        <taxon>Scolopendra</taxon>
    </lineage>
</organism>
<accession>P0C8D1</accession>
<keyword id="KW-0903">Direct protein sequencing</keyword>
<keyword id="KW-0528">Neurotoxin</keyword>
<keyword id="KW-0964">Secreted</keyword>
<keyword id="KW-0800">Toxin</keyword>